<reference key="1">
    <citation type="journal article" date="1990" name="Genes Dev.">
        <title>A new Drosophila homeo box gene is expressed in mesodermal precursor cells of distinct muscles during embryogenesis.</title>
        <authorList>
            <person name="Dohrmann C."/>
            <person name="Azpiazu N."/>
            <person name="Frasch M."/>
        </authorList>
    </citation>
    <scope>NUCLEOTIDE SEQUENCE [MRNA]</scope>
</reference>
<reference key="2">
    <citation type="journal article" date="2000" name="Science">
        <title>The genome sequence of Drosophila melanogaster.</title>
        <authorList>
            <person name="Adams M.D."/>
            <person name="Celniker S.E."/>
            <person name="Holt R.A."/>
            <person name="Evans C.A."/>
            <person name="Gocayne J.D."/>
            <person name="Amanatides P.G."/>
            <person name="Scherer S.E."/>
            <person name="Li P.W."/>
            <person name="Hoskins R.A."/>
            <person name="Galle R.F."/>
            <person name="George R.A."/>
            <person name="Lewis S.E."/>
            <person name="Richards S."/>
            <person name="Ashburner M."/>
            <person name="Henderson S.N."/>
            <person name="Sutton G.G."/>
            <person name="Wortman J.R."/>
            <person name="Yandell M.D."/>
            <person name="Zhang Q."/>
            <person name="Chen L.X."/>
            <person name="Brandon R.C."/>
            <person name="Rogers Y.-H.C."/>
            <person name="Blazej R.G."/>
            <person name="Champe M."/>
            <person name="Pfeiffer B.D."/>
            <person name="Wan K.H."/>
            <person name="Doyle C."/>
            <person name="Baxter E.G."/>
            <person name="Helt G."/>
            <person name="Nelson C.R."/>
            <person name="Miklos G.L.G."/>
            <person name="Abril J.F."/>
            <person name="Agbayani A."/>
            <person name="An H.-J."/>
            <person name="Andrews-Pfannkoch C."/>
            <person name="Baldwin D."/>
            <person name="Ballew R.M."/>
            <person name="Basu A."/>
            <person name="Baxendale J."/>
            <person name="Bayraktaroglu L."/>
            <person name="Beasley E.M."/>
            <person name="Beeson K.Y."/>
            <person name="Benos P.V."/>
            <person name="Berman B.P."/>
            <person name="Bhandari D."/>
            <person name="Bolshakov S."/>
            <person name="Borkova D."/>
            <person name="Botchan M.R."/>
            <person name="Bouck J."/>
            <person name="Brokstein P."/>
            <person name="Brottier P."/>
            <person name="Burtis K.C."/>
            <person name="Busam D.A."/>
            <person name="Butler H."/>
            <person name="Cadieu E."/>
            <person name="Center A."/>
            <person name="Chandra I."/>
            <person name="Cherry J.M."/>
            <person name="Cawley S."/>
            <person name="Dahlke C."/>
            <person name="Davenport L.B."/>
            <person name="Davies P."/>
            <person name="de Pablos B."/>
            <person name="Delcher A."/>
            <person name="Deng Z."/>
            <person name="Mays A.D."/>
            <person name="Dew I."/>
            <person name="Dietz S.M."/>
            <person name="Dodson K."/>
            <person name="Doup L.E."/>
            <person name="Downes M."/>
            <person name="Dugan-Rocha S."/>
            <person name="Dunkov B.C."/>
            <person name="Dunn P."/>
            <person name="Durbin K.J."/>
            <person name="Evangelista C.C."/>
            <person name="Ferraz C."/>
            <person name="Ferriera S."/>
            <person name="Fleischmann W."/>
            <person name="Fosler C."/>
            <person name="Gabrielian A.E."/>
            <person name="Garg N.S."/>
            <person name="Gelbart W.M."/>
            <person name="Glasser K."/>
            <person name="Glodek A."/>
            <person name="Gong F."/>
            <person name="Gorrell J.H."/>
            <person name="Gu Z."/>
            <person name="Guan P."/>
            <person name="Harris M."/>
            <person name="Harris N.L."/>
            <person name="Harvey D.A."/>
            <person name="Heiman T.J."/>
            <person name="Hernandez J.R."/>
            <person name="Houck J."/>
            <person name="Hostin D."/>
            <person name="Houston K.A."/>
            <person name="Howland T.J."/>
            <person name="Wei M.-H."/>
            <person name="Ibegwam C."/>
            <person name="Jalali M."/>
            <person name="Kalush F."/>
            <person name="Karpen G.H."/>
            <person name="Ke Z."/>
            <person name="Kennison J.A."/>
            <person name="Ketchum K.A."/>
            <person name="Kimmel B.E."/>
            <person name="Kodira C.D."/>
            <person name="Kraft C.L."/>
            <person name="Kravitz S."/>
            <person name="Kulp D."/>
            <person name="Lai Z."/>
            <person name="Lasko P."/>
            <person name="Lei Y."/>
            <person name="Levitsky A.A."/>
            <person name="Li J.H."/>
            <person name="Li Z."/>
            <person name="Liang Y."/>
            <person name="Lin X."/>
            <person name="Liu X."/>
            <person name="Mattei B."/>
            <person name="McIntosh T.C."/>
            <person name="McLeod M.P."/>
            <person name="McPherson D."/>
            <person name="Merkulov G."/>
            <person name="Milshina N.V."/>
            <person name="Mobarry C."/>
            <person name="Morris J."/>
            <person name="Moshrefi A."/>
            <person name="Mount S.M."/>
            <person name="Moy M."/>
            <person name="Murphy B."/>
            <person name="Murphy L."/>
            <person name="Muzny D.M."/>
            <person name="Nelson D.L."/>
            <person name="Nelson D.R."/>
            <person name="Nelson K.A."/>
            <person name="Nixon K."/>
            <person name="Nusskern D.R."/>
            <person name="Pacleb J.M."/>
            <person name="Palazzolo M."/>
            <person name="Pittman G.S."/>
            <person name="Pan S."/>
            <person name="Pollard J."/>
            <person name="Puri V."/>
            <person name="Reese M.G."/>
            <person name="Reinert K."/>
            <person name="Remington K."/>
            <person name="Saunders R.D.C."/>
            <person name="Scheeler F."/>
            <person name="Shen H."/>
            <person name="Shue B.C."/>
            <person name="Siden-Kiamos I."/>
            <person name="Simpson M."/>
            <person name="Skupski M.P."/>
            <person name="Smith T.J."/>
            <person name="Spier E."/>
            <person name="Spradling A.C."/>
            <person name="Stapleton M."/>
            <person name="Strong R."/>
            <person name="Sun E."/>
            <person name="Svirskas R."/>
            <person name="Tector C."/>
            <person name="Turner R."/>
            <person name="Venter E."/>
            <person name="Wang A.H."/>
            <person name="Wang X."/>
            <person name="Wang Z.-Y."/>
            <person name="Wassarman D.A."/>
            <person name="Weinstock G.M."/>
            <person name="Weissenbach J."/>
            <person name="Williams S.M."/>
            <person name="Woodage T."/>
            <person name="Worley K.C."/>
            <person name="Wu D."/>
            <person name="Yang S."/>
            <person name="Yao Q.A."/>
            <person name="Ye J."/>
            <person name="Yeh R.-F."/>
            <person name="Zaveri J.S."/>
            <person name="Zhan M."/>
            <person name="Zhang G."/>
            <person name="Zhao Q."/>
            <person name="Zheng L."/>
            <person name="Zheng X.H."/>
            <person name="Zhong F.N."/>
            <person name="Zhong W."/>
            <person name="Zhou X."/>
            <person name="Zhu S.C."/>
            <person name="Zhu X."/>
            <person name="Smith H.O."/>
            <person name="Gibbs R.A."/>
            <person name="Myers E.W."/>
            <person name="Rubin G.M."/>
            <person name="Venter J.C."/>
        </authorList>
    </citation>
    <scope>NUCLEOTIDE SEQUENCE [LARGE SCALE GENOMIC DNA]</scope>
    <source>
        <strain>Berkeley</strain>
    </source>
</reference>
<reference key="3">
    <citation type="journal article" date="2002" name="Genome Biol.">
        <title>Annotation of the Drosophila melanogaster euchromatic genome: a systematic review.</title>
        <authorList>
            <person name="Misra S."/>
            <person name="Crosby M.A."/>
            <person name="Mungall C.J."/>
            <person name="Matthews B.B."/>
            <person name="Campbell K.S."/>
            <person name="Hradecky P."/>
            <person name="Huang Y."/>
            <person name="Kaminker J.S."/>
            <person name="Millburn G.H."/>
            <person name="Prochnik S.E."/>
            <person name="Smith C.D."/>
            <person name="Tupy J.L."/>
            <person name="Whitfield E.J."/>
            <person name="Bayraktaroglu L."/>
            <person name="Berman B.P."/>
            <person name="Bettencourt B.R."/>
            <person name="Celniker S.E."/>
            <person name="de Grey A.D.N.J."/>
            <person name="Drysdale R.A."/>
            <person name="Harris N.L."/>
            <person name="Richter J."/>
            <person name="Russo S."/>
            <person name="Schroeder A.J."/>
            <person name="Shu S.Q."/>
            <person name="Stapleton M."/>
            <person name="Yamada C."/>
            <person name="Ashburner M."/>
            <person name="Gelbart W.M."/>
            <person name="Rubin G.M."/>
            <person name="Lewis S.E."/>
        </authorList>
    </citation>
    <scope>GENOME REANNOTATION</scope>
    <source>
        <strain>Berkeley</strain>
    </source>
</reference>
<reference key="4">
    <citation type="journal article" date="1989" name="Proc. Natl. Acad. Sci. U.S.A.">
        <title>Drosophila NK-homeobox genes.</title>
        <authorList>
            <person name="Kim Y."/>
            <person name="Nirenberg M."/>
        </authorList>
    </citation>
    <scope>NUCLEOTIDE SEQUENCE [GENOMIC DNA] OF 497-625</scope>
</reference>
<accession>P22807</accession>
<accession>Q9VD96</accession>
<name>SLOU_DROME</name>
<dbReference type="EMBL" id="X55393">
    <property type="protein sequence ID" value="CAA39067.1"/>
    <property type="molecule type" value="mRNA"/>
</dbReference>
<dbReference type="EMBL" id="AE014297">
    <property type="protein sequence ID" value="AAF55901.3"/>
    <property type="molecule type" value="Genomic_DNA"/>
</dbReference>
<dbReference type="EMBL" id="M27289">
    <property type="protein sequence ID" value="AAA28616.1"/>
    <property type="molecule type" value="Genomic_DNA"/>
</dbReference>
<dbReference type="PIR" id="A36664">
    <property type="entry name" value="A36664"/>
</dbReference>
<dbReference type="RefSeq" id="NP_476657.1">
    <property type="nucleotide sequence ID" value="NM_057309.3"/>
</dbReference>
<dbReference type="SMR" id="P22807"/>
<dbReference type="BioGRID" id="67513">
    <property type="interactions" value="23"/>
</dbReference>
<dbReference type="DIP" id="DIP-17156N"/>
<dbReference type="FunCoup" id="P22807">
    <property type="interactions" value="47"/>
</dbReference>
<dbReference type="IntAct" id="P22807">
    <property type="interactions" value="6"/>
</dbReference>
<dbReference type="STRING" id="7227.FBpp0303415"/>
<dbReference type="PaxDb" id="7227-FBpp0083521"/>
<dbReference type="EnsemblMetazoa" id="FBtr0084123">
    <property type="protein sequence ID" value="FBpp0083521"/>
    <property type="gene ID" value="FBgn0002941"/>
</dbReference>
<dbReference type="GeneID" id="42547"/>
<dbReference type="KEGG" id="dme:Dmel_CG6534"/>
<dbReference type="AGR" id="FB:FBgn0002941"/>
<dbReference type="CTD" id="42547"/>
<dbReference type="FlyBase" id="FBgn0002941">
    <property type="gene designation" value="slou"/>
</dbReference>
<dbReference type="VEuPathDB" id="VectorBase:FBgn0002941"/>
<dbReference type="eggNOG" id="KOG0488">
    <property type="taxonomic scope" value="Eukaryota"/>
</dbReference>
<dbReference type="GeneTree" id="ENSGT00940000172282"/>
<dbReference type="HOGENOM" id="CLU_401307_0_0_1"/>
<dbReference type="InParanoid" id="P22807"/>
<dbReference type="OMA" id="MHDHLDD"/>
<dbReference type="OrthoDB" id="6159439at2759"/>
<dbReference type="PhylomeDB" id="P22807"/>
<dbReference type="SignaLink" id="P22807"/>
<dbReference type="BioGRID-ORCS" id="42547">
    <property type="hits" value="0 hits in 3 CRISPR screens"/>
</dbReference>
<dbReference type="GenomeRNAi" id="42547"/>
<dbReference type="PRO" id="PR:P22807"/>
<dbReference type="Proteomes" id="UP000000803">
    <property type="component" value="Chromosome 3R"/>
</dbReference>
<dbReference type="Bgee" id="FBgn0002941">
    <property type="expression patterns" value="Expressed in A2-7 ventral transverse muscle 1 (Drosophila) and 6 other cell types or tissues"/>
</dbReference>
<dbReference type="ExpressionAtlas" id="P22807">
    <property type="expression patterns" value="baseline and differential"/>
</dbReference>
<dbReference type="GO" id="GO:0005634">
    <property type="term" value="C:nucleus"/>
    <property type="evidence" value="ECO:0000314"/>
    <property type="project" value="FlyBase"/>
</dbReference>
<dbReference type="GO" id="GO:0000981">
    <property type="term" value="F:DNA-binding transcription factor activity, RNA polymerase II-specific"/>
    <property type="evidence" value="ECO:0000318"/>
    <property type="project" value="GO_Central"/>
</dbReference>
<dbReference type="GO" id="GO:0000978">
    <property type="term" value="F:RNA polymerase II cis-regulatory region sequence-specific DNA binding"/>
    <property type="evidence" value="ECO:0000318"/>
    <property type="project" value="GO_Central"/>
</dbReference>
<dbReference type="GO" id="GO:0030154">
    <property type="term" value="P:cell differentiation"/>
    <property type="evidence" value="ECO:0000318"/>
    <property type="project" value="GO_Central"/>
</dbReference>
<dbReference type="GO" id="GO:0007521">
    <property type="term" value="P:muscle cell fate determination"/>
    <property type="evidence" value="ECO:0000315"/>
    <property type="project" value="FlyBase"/>
</dbReference>
<dbReference type="GO" id="GO:0007517">
    <property type="term" value="P:muscle organ development"/>
    <property type="evidence" value="ECO:0000304"/>
    <property type="project" value="FlyBase"/>
</dbReference>
<dbReference type="GO" id="GO:0000122">
    <property type="term" value="P:negative regulation of transcription by RNA polymerase II"/>
    <property type="evidence" value="ECO:0000315"/>
    <property type="project" value="FlyBase"/>
</dbReference>
<dbReference type="GO" id="GO:0006357">
    <property type="term" value="P:regulation of transcription by RNA polymerase II"/>
    <property type="evidence" value="ECO:0000318"/>
    <property type="project" value="GO_Central"/>
</dbReference>
<dbReference type="CDD" id="cd00086">
    <property type="entry name" value="homeodomain"/>
    <property type="match status" value="1"/>
</dbReference>
<dbReference type="FunFam" id="1.10.10.60:FF:000730">
    <property type="entry name" value="homeobox protein slou"/>
    <property type="match status" value="1"/>
</dbReference>
<dbReference type="Gene3D" id="1.10.10.60">
    <property type="entry name" value="Homeodomain-like"/>
    <property type="match status" value="1"/>
</dbReference>
<dbReference type="InterPro" id="IPR001356">
    <property type="entry name" value="HD"/>
</dbReference>
<dbReference type="InterPro" id="IPR020479">
    <property type="entry name" value="HD_metazoa"/>
</dbReference>
<dbReference type="InterPro" id="IPR017970">
    <property type="entry name" value="Homeobox_CS"/>
</dbReference>
<dbReference type="InterPro" id="IPR050394">
    <property type="entry name" value="Homeobox_NK-like"/>
</dbReference>
<dbReference type="InterPro" id="IPR009057">
    <property type="entry name" value="Homeodomain-like_sf"/>
</dbReference>
<dbReference type="PANTHER" id="PTHR24340">
    <property type="entry name" value="HOMEOBOX PROTEIN NKX"/>
    <property type="match status" value="1"/>
</dbReference>
<dbReference type="PANTHER" id="PTHR24340:SF37">
    <property type="entry name" value="HOMEOBOX PROTEIN SLOU"/>
    <property type="match status" value="1"/>
</dbReference>
<dbReference type="Pfam" id="PF00046">
    <property type="entry name" value="Homeodomain"/>
    <property type="match status" value="1"/>
</dbReference>
<dbReference type="PRINTS" id="PR00024">
    <property type="entry name" value="HOMEOBOX"/>
</dbReference>
<dbReference type="SMART" id="SM00389">
    <property type="entry name" value="HOX"/>
    <property type="match status" value="1"/>
</dbReference>
<dbReference type="SUPFAM" id="SSF46689">
    <property type="entry name" value="Homeodomain-like"/>
    <property type="match status" value="1"/>
</dbReference>
<dbReference type="PROSITE" id="PS00027">
    <property type="entry name" value="HOMEOBOX_1"/>
    <property type="match status" value="1"/>
</dbReference>
<dbReference type="PROSITE" id="PS50071">
    <property type="entry name" value="HOMEOBOX_2"/>
    <property type="match status" value="1"/>
</dbReference>
<protein>
    <recommendedName>
        <fullName>Homeobox protein slou</fullName>
    </recommendedName>
    <alternativeName>
        <fullName>Homeobox protein NK-1</fullName>
    </alternativeName>
    <alternativeName>
        <fullName>Protein slouch</fullName>
    </alternativeName>
    <alternativeName>
        <fullName>S59/2</fullName>
    </alternativeName>
</protein>
<organism>
    <name type="scientific">Drosophila melanogaster</name>
    <name type="common">Fruit fly</name>
    <dbReference type="NCBI Taxonomy" id="7227"/>
    <lineage>
        <taxon>Eukaryota</taxon>
        <taxon>Metazoa</taxon>
        <taxon>Ecdysozoa</taxon>
        <taxon>Arthropoda</taxon>
        <taxon>Hexapoda</taxon>
        <taxon>Insecta</taxon>
        <taxon>Pterygota</taxon>
        <taxon>Neoptera</taxon>
        <taxon>Endopterygota</taxon>
        <taxon>Diptera</taxon>
        <taxon>Brachycera</taxon>
        <taxon>Muscomorpha</taxon>
        <taxon>Ephydroidea</taxon>
        <taxon>Drosophilidae</taxon>
        <taxon>Drosophila</taxon>
        <taxon>Sophophora</taxon>
    </lineage>
</organism>
<sequence>MVMLQSPAQKASDSASAQNTAVGGLMSPNSNPDSPKSNTSPDVASADSVVSGTGGGSTPPAAKIPKFIISANGAAVAGKQEQELRYSLERLKQMSSESGSLLSRLSPLQEDSQDKEKPNHNNNNSLTNHNANSNTRRSQSPPASVGSVSFSSPAQQRKLLELNAVRHLARPEPLQHPHAALLQQHPHLLQNPQFLAAAQQHMHHHQHQHHQHPAHPHSHQHPHPHPHPHPHPHPSAVFHLRAPSSSSTAPPSPATSPLSPPTSPAMHSDQQMSPPIAPPQNPPHSSQPPQQQQVAAPSDMDLERIKLVAAVAARTTQASSTSALASASNSVSNASISISNSSSGSPSGRDLSDYGFRIQLGGLAAAAAAAAATSRQIAAATYARSDTSEELNVDGNDEDSNDGSHSTPSVCPVDLTRSVNSSAAANPSSASTSASSDRDAATKRLAFSVENILDPNKFTGNKLPSGPFGHPRQWSYERDEEMQERLDDDQSEDMSAQDLNDMDQDDMCDDGSDIDDPSSETDSKKGGSRNGDGKSGGGGGGGSKPRRARTAFTYEQLVSLENKFKTTRYLSVCERLNLALSLSLTETQVKIWFQNRRTKWKKQNPGMDVNSPTIPPPGGGSFGPGAYASGLLYSHAVPYPPYGPYFHPLGAHHLSHSHS</sequence>
<keyword id="KW-0217">Developmental protein</keyword>
<keyword id="KW-0238">DNA-binding</keyword>
<keyword id="KW-0371">Homeobox</keyword>
<keyword id="KW-0539">Nucleus</keyword>
<keyword id="KW-1185">Reference proteome</keyword>
<keyword id="KW-0677">Repeat</keyword>
<evidence type="ECO:0000255" key="1">
    <source>
        <dbReference type="PROSITE-ProRule" id="PRU00108"/>
    </source>
</evidence>
<evidence type="ECO:0000256" key="2">
    <source>
        <dbReference type="SAM" id="MobiDB-lite"/>
    </source>
</evidence>
<evidence type="ECO:0000305" key="3"/>
<proteinExistence type="evidence at transcript level"/>
<comment type="function">
    <text>May play a role in specifying the identity of particular somatic muscles and neurons of the CNS.</text>
</comment>
<comment type="subcellular location">
    <subcellularLocation>
        <location evidence="3">Nucleus</location>
    </subcellularLocation>
</comment>
<comment type="tissue specificity">
    <text>Mesodermal precursor cells of distinct muscles during embryogenesis, a subset of neuronal cells of the CNS and their precursors and also in cells of a small region of the midgut.</text>
</comment>
<comment type="developmental stage">
    <text>Postgastrulation-stage.</text>
</comment>
<comment type="similarity">
    <text evidence="3">Belongs to the NK-1 homeobox family.</text>
</comment>
<feature type="chain" id="PRO_0000049070" description="Homeobox protein slou">
    <location>
        <begin position="1"/>
        <end position="659"/>
    </location>
</feature>
<feature type="repeat" description="1">
    <location>
        <begin position="221"/>
        <end position="222"/>
    </location>
</feature>
<feature type="repeat" description="2">
    <location>
        <begin position="223"/>
        <end position="224"/>
    </location>
</feature>
<feature type="repeat" description="3">
    <location>
        <begin position="225"/>
        <end position="226"/>
    </location>
</feature>
<feature type="repeat" description="4">
    <location>
        <begin position="227"/>
        <end position="228"/>
    </location>
</feature>
<feature type="repeat" description="5">
    <location>
        <begin position="229"/>
        <end position="230"/>
    </location>
</feature>
<feature type="repeat" description="6">
    <location>
        <begin position="231"/>
        <end position="232"/>
    </location>
</feature>
<feature type="repeat" description="7">
    <location>
        <begin position="233"/>
        <end position="234"/>
    </location>
</feature>
<feature type="DNA-binding region" description="Homeobox" evidence="1">
    <location>
        <begin position="545"/>
        <end position="604"/>
    </location>
</feature>
<feature type="region of interest" description="Disordered" evidence="2">
    <location>
        <begin position="1"/>
        <end position="63"/>
    </location>
</feature>
<feature type="region of interest" description="Disordered" evidence="2">
    <location>
        <begin position="94"/>
        <end position="152"/>
    </location>
</feature>
<feature type="region of interest" description="Disordered" evidence="2">
    <location>
        <begin position="198"/>
        <end position="298"/>
    </location>
</feature>
<feature type="region of interest" description="7 X 2 AA tandem repeats of H-P">
    <location>
        <begin position="221"/>
        <end position="234"/>
    </location>
</feature>
<feature type="region of interest" description="Disordered" evidence="2">
    <location>
        <begin position="316"/>
        <end position="349"/>
    </location>
</feature>
<feature type="region of interest" description="Disordered" evidence="2">
    <location>
        <begin position="376"/>
        <end position="440"/>
    </location>
</feature>
<feature type="region of interest" description="Disordered" evidence="2">
    <location>
        <begin position="455"/>
        <end position="548"/>
    </location>
</feature>
<feature type="compositionally biased region" description="Polar residues" evidence="2">
    <location>
        <begin position="1"/>
        <end position="21"/>
    </location>
</feature>
<feature type="compositionally biased region" description="Low complexity" evidence="2">
    <location>
        <begin position="27"/>
        <end position="51"/>
    </location>
</feature>
<feature type="compositionally biased region" description="Low complexity" evidence="2">
    <location>
        <begin position="95"/>
        <end position="108"/>
    </location>
</feature>
<feature type="compositionally biased region" description="Low complexity" evidence="2">
    <location>
        <begin position="120"/>
        <end position="135"/>
    </location>
</feature>
<feature type="compositionally biased region" description="Polar residues" evidence="2">
    <location>
        <begin position="136"/>
        <end position="152"/>
    </location>
</feature>
<feature type="compositionally biased region" description="Basic residues" evidence="2">
    <location>
        <begin position="201"/>
        <end position="232"/>
    </location>
</feature>
<feature type="compositionally biased region" description="Pro residues" evidence="2">
    <location>
        <begin position="250"/>
        <end position="263"/>
    </location>
</feature>
<feature type="compositionally biased region" description="Pro residues" evidence="2">
    <location>
        <begin position="275"/>
        <end position="286"/>
    </location>
</feature>
<feature type="compositionally biased region" description="Low complexity" evidence="2">
    <location>
        <begin position="287"/>
        <end position="298"/>
    </location>
</feature>
<feature type="compositionally biased region" description="Low complexity" evidence="2">
    <location>
        <begin position="316"/>
        <end position="347"/>
    </location>
</feature>
<feature type="compositionally biased region" description="Acidic residues" evidence="2">
    <location>
        <begin position="388"/>
        <end position="401"/>
    </location>
</feature>
<feature type="compositionally biased region" description="Low complexity" evidence="2">
    <location>
        <begin position="417"/>
        <end position="435"/>
    </location>
</feature>
<feature type="compositionally biased region" description="Acidic residues" evidence="2">
    <location>
        <begin position="478"/>
        <end position="492"/>
    </location>
</feature>
<feature type="compositionally biased region" description="Acidic residues" evidence="2">
    <location>
        <begin position="500"/>
        <end position="519"/>
    </location>
</feature>
<feature type="compositionally biased region" description="Gly residues" evidence="2">
    <location>
        <begin position="528"/>
        <end position="543"/>
    </location>
</feature>
<gene>
    <name type="primary">slou</name>
    <name type="synonym">NK1</name>
    <name type="synonym">S59</name>
    <name type="ORF">CG6534</name>
</gene>